<gene>
    <name evidence="1" type="primary">hisC</name>
    <name type="ordered locus">xcc-b100_2097</name>
</gene>
<dbReference type="EC" id="2.6.1.9" evidence="1"/>
<dbReference type="EMBL" id="AM920689">
    <property type="protein sequence ID" value="CAP51450.1"/>
    <property type="molecule type" value="Genomic_DNA"/>
</dbReference>
<dbReference type="SMR" id="B0RSL5"/>
<dbReference type="KEGG" id="xca:xcc-b100_2097"/>
<dbReference type="HOGENOM" id="CLU_017584_3_1_6"/>
<dbReference type="UniPathway" id="UPA00031">
    <property type="reaction ID" value="UER00012"/>
</dbReference>
<dbReference type="Proteomes" id="UP000001188">
    <property type="component" value="Chromosome"/>
</dbReference>
<dbReference type="GO" id="GO:0004400">
    <property type="term" value="F:histidinol-phosphate transaminase activity"/>
    <property type="evidence" value="ECO:0007669"/>
    <property type="project" value="UniProtKB-UniRule"/>
</dbReference>
<dbReference type="GO" id="GO:0030170">
    <property type="term" value="F:pyridoxal phosphate binding"/>
    <property type="evidence" value="ECO:0007669"/>
    <property type="project" value="InterPro"/>
</dbReference>
<dbReference type="GO" id="GO:0000105">
    <property type="term" value="P:L-histidine biosynthetic process"/>
    <property type="evidence" value="ECO:0007669"/>
    <property type="project" value="UniProtKB-UniRule"/>
</dbReference>
<dbReference type="CDD" id="cd00609">
    <property type="entry name" value="AAT_like"/>
    <property type="match status" value="1"/>
</dbReference>
<dbReference type="Gene3D" id="3.90.1150.10">
    <property type="entry name" value="Aspartate Aminotransferase, domain 1"/>
    <property type="match status" value="1"/>
</dbReference>
<dbReference type="Gene3D" id="3.40.640.10">
    <property type="entry name" value="Type I PLP-dependent aspartate aminotransferase-like (Major domain)"/>
    <property type="match status" value="1"/>
</dbReference>
<dbReference type="HAMAP" id="MF_01023">
    <property type="entry name" value="HisC_aminotrans_2"/>
    <property type="match status" value="1"/>
</dbReference>
<dbReference type="InterPro" id="IPR004839">
    <property type="entry name" value="Aminotransferase_I/II_large"/>
</dbReference>
<dbReference type="InterPro" id="IPR005861">
    <property type="entry name" value="HisP_aminotrans"/>
</dbReference>
<dbReference type="InterPro" id="IPR015424">
    <property type="entry name" value="PyrdxlP-dep_Trfase"/>
</dbReference>
<dbReference type="InterPro" id="IPR015421">
    <property type="entry name" value="PyrdxlP-dep_Trfase_major"/>
</dbReference>
<dbReference type="InterPro" id="IPR015422">
    <property type="entry name" value="PyrdxlP-dep_Trfase_small"/>
</dbReference>
<dbReference type="NCBIfam" id="TIGR01141">
    <property type="entry name" value="hisC"/>
    <property type="match status" value="1"/>
</dbReference>
<dbReference type="PANTHER" id="PTHR42885:SF2">
    <property type="entry name" value="HISTIDINOL-PHOSPHATE AMINOTRANSFERASE"/>
    <property type="match status" value="1"/>
</dbReference>
<dbReference type="PANTHER" id="PTHR42885">
    <property type="entry name" value="HISTIDINOL-PHOSPHATE AMINOTRANSFERASE-RELATED"/>
    <property type="match status" value="1"/>
</dbReference>
<dbReference type="Pfam" id="PF00155">
    <property type="entry name" value="Aminotran_1_2"/>
    <property type="match status" value="1"/>
</dbReference>
<dbReference type="SUPFAM" id="SSF53383">
    <property type="entry name" value="PLP-dependent transferases"/>
    <property type="match status" value="1"/>
</dbReference>
<keyword id="KW-0028">Amino-acid biosynthesis</keyword>
<keyword id="KW-0032">Aminotransferase</keyword>
<keyword id="KW-0368">Histidine biosynthesis</keyword>
<keyword id="KW-0663">Pyridoxal phosphate</keyword>
<keyword id="KW-0808">Transferase</keyword>
<sequence>MSTASVMDLVRDDLRAFAGYASARTSALQGDVWLNANESAWGNPADPDASTRRYPDPQPKGLRAALAQLYGCAPEQLLIGRGSDEAIDLLVRGLCVPERDAVVVTPPVFGMYAVCARLQNAPLVEVPLVDGADGLHADVPVIVQAALDAKAKLVFLCSPSNPAGSAIPLAEIEVALQALQGKAVVVVDEAYGEFSDVPSAIGLLARYDNLAVLRTLSKAHALAAARIGSLIANAELIALLRRCQAPYPVPTPCAVMAEQALSAPALAVTQRRVTEIRAERARLHAALVQVAGVRQVYPSQGNFLLVRFDDAEAAFQALLEAGVVVRDQRAVPRLSDALRITIGTPEQNDRVLGALQRKQEAA</sequence>
<organism>
    <name type="scientific">Xanthomonas campestris pv. campestris (strain B100)</name>
    <dbReference type="NCBI Taxonomy" id="509169"/>
    <lineage>
        <taxon>Bacteria</taxon>
        <taxon>Pseudomonadati</taxon>
        <taxon>Pseudomonadota</taxon>
        <taxon>Gammaproteobacteria</taxon>
        <taxon>Lysobacterales</taxon>
        <taxon>Lysobacteraceae</taxon>
        <taxon>Xanthomonas</taxon>
    </lineage>
</organism>
<accession>B0RSL5</accession>
<feature type="chain" id="PRO_1000135431" description="Histidinol-phosphate aminotransferase">
    <location>
        <begin position="1"/>
        <end position="362"/>
    </location>
</feature>
<feature type="modified residue" description="N6-(pyridoxal phosphate)lysine" evidence="1">
    <location>
        <position position="218"/>
    </location>
</feature>
<protein>
    <recommendedName>
        <fullName evidence="1">Histidinol-phosphate aminotransferase</fullName>
        <ecNumber evidence="1">2.6.1.9</ecNumber>
    </recommendedName>
    <alternativeName>
        <fullName evidence="1">Imidazole acetol-phosphate transaminase</fullName>
    </alternativeName>
</protein>
<name>HIS8_XANCB</name>
<comment type="catalytic activity">
    <reaction evidence="1">
        <text>L-histidinol phosphate + 2-oxoglutarate = 3-(imidazol-4-yl)-2-oxopropyl phosphate + L-glutamate</text>
        <dbReference type="Rhea" id="RHEA:23744"/>
        <dbReference type="ChEBI" id="CHEBI:16810"/>
        <dbReference type="ChEBI" id="CHEBI:29985"/>
        <dbReference type="ChEBI" id="CHEBI:57766"/>
        <dbReference type="ChEBI" id="CHEBI:57980"/>
        <dbReference type="EC" id="2.6.1.9"/>
    </reaction>
</comment>
<comment type="cofactor">
    <cofactor evidence="1">
        <name>pyridoxal 5'-phosphate</name>
        <dbReference type="ChEBI" id="CHEBI:597326"/>
    </cofactor>
</comment>
<comment type="pathway">
    <text evidence="1">Amino-acid biosynthesis; L-histidine biosynthesis; L-histidine from 5-phospho-alpha-D-ribose 1-diphosphate: step 7/9.</text>
</comment>
<comment type="subunit">
    <text evidence="1">Homodimer.</text>
</comment>
<comment type="similarity">
    <text evidence="1">Belongs to the class-II pyridoxal-phosphate-dependent aminotransferase family. Histidinol-phosphate aminotransferase subfamily.</text>
</comment>
<reference key="1">
    <citation type="journal article" date="2008" name="J. Biotechnol.">
        <title>The genome of Xanthomonas campestris pv. campestris B100 and its use for the reconstruction of metabolic pathways involved in xanthan biosynthesis.</title>
        <authorList>
            <person name="Vorhoelter F.-J."/>
            <person name="Schneiker S."/>
            <person name="Goesmann A."/>
            <person name="Krause L."/>
            <person name="Bekel T."/>
            <person name="Kaiser O."/>
            <person name="Linke B."/>
            <person name="Patschkowski T."/>
            <person name="Rueckert C."/>
            <person name="Schmid J."/>
            <person name="Sidhu V.K."/>
            <person name="Sieber V."/>
            <person name="Tauch A."/>
            <person name="Watt S.A."/>
            <person name="Weisshaar B."/>
            <person name="Becker A."/>
            <person name="Niehaus K."/>
            <person name="Puehler A."/>
        </authorList>
    </citation>
    <scope>NUCLEOTIDE SEQUENCE [LARGE SCALE GENOMIC DNA]</scope>
    <source>
        <strain>B100</strain>
    </source>
</reference>
<evidence type="ECO:0000255" key="1">
    <source>
        <dbReference type="HAMAP-Rule" id="MF_01023"/>
    </source>
</evidence>
<proteinExistence type="inferred from homology"/>